<evidence type="ECO:0000250" key="1">
    <source>
        <dbReference type="UniProtKB" id="Q66IA6"/>
    </source>
</evidence>
<evidence type="ECO:0000250" key="2">
    <source>
        <dbReference type="UniProtKB" id="Q86Y78"/>
    </source>
</evidence>
<evidence type="ECO:0000255" key="3"/>
<evidence type="ECO:0000255" key="4">
    <source>
        <dbReference type="PROSITE-ProRule" id="PRU00498"/>
    </source>
</evidence>
<evidence type="ECO:0000269" key="5">
    <source>
    </source>
</evidence>
<evidence type="ECO:0000269" key="6">
    <source>
    </source>
</evidence>
<gene>
    <name type="primary">Lypd6</name>
</gene>
<keyword id="KW-1003">Cell membrane</keyword>
<keyword id="KW-0966">Cell projection</keyword>
<keyword id="KW-0963">Cytoplasm</keyword>
<keyword id="KW-1015">Disulfide bond</keyword>
<keyword id="KW-0325">Glycoprotein</keyword>
<keyword id="KW-0336">GPI-anchor</keyword>
<keyword id="KW-0449">Lipoprotein</keyword>
<keyword id="KW-0472">Membrane</keyword>
<keyword id="KW-1185">Reference proteome</keyword>
<keyword id="KW-0964">Secreted</keyword>
<keyword id="KW-0732">Signal</keyword>
<keyword id="KW-0770">Synapse</keyword>
<keyword id="KW-0771">Synaptosome</keyword>
<reference key="1">
    <citation type="journal article" date="2004" name="Nature">
        <title>Genome sequence of the Brown Norway rat yields insights into mammalian evolution.</title>
        <authorList>
            <person name="Gibbs R.A."/>
            <person name="Weinstock G.M."/>
            <person name="Metzker M.L."/>
            <person name="Muzny D.M."/>
            <person name="Sodergren E.J."/>
            <person name="Scherer S."/>
            <person name="Scott G."/>
            <person name="Steffen D."/>
            <person name="Worley K.C."/>
            <person name="Burch P.E."/>
            <person name="Okwuonu G."/>
            <person name="Hines S."/>
            <person name="Lewis L."/>
            <person name="Deramo C."/>
            <person name="Delgado O."/>
            <person name="Dugan-Rocha S."/>
            <person name="Miner G."/>
            <person name="Morgan M."/>
            <person name="Hawes A."/>
            <person name="Gill R."/>
            <person name="Holt R.A."/>
            <person name="Adams M.D."/>
            <person name="Amanatides P.G."/>
            <person name="Baden-Tillson H."/>
            <person name="Barnstead M."/>
            <person name="Chin S."/>
            <person name="Evans C.A."/>
            <person name="Ferriera S."/>
            <person name="Fosler C."/>
            <person name="Glodek A."/>
            <person name="Gu Z."/>
            <person name="Jennings D."/>
            <person name="Kraft C.L."/>
            <person name="Nguyen T."/>
            <person name="Pfannkoch C.M."/>
            <person name="Sitter C."/>
            <person name="Sutton G.G."/>
            <person name="Venter J.C."/>
            <person name="Woodage T."/>
            <person name="Smith D."/>
            <person name="Lee H.-M."/>
            <person name="Gustafson E."/>
            <person name="Cahill P."/>
            <person name="Kana A."/>
            <person name="Doucette-Stamm L."/>
            <person name="Weinstock K."/>
            <person name="Fechtel K."/>
            <person name="Weiss R.B."/>
            <person name="Dunn D.M."/>
            <person name="Green E.D."/>
            <person name="Blakesley R.W."/>
            <person name="Bouffard G.G."/>
            <person name="De Jong P.J."/>
            <person name="Osoegawa K."/>
            <person name="Zhu B."/>
            <person name="Marra M."/>
            <person name="Schein J."/>
            <person name="Bosdet I."/>
            <person name="Fjell C."/>
            <person name="Jones S."/>
            <person name="Krzywinski M."/>
            <person name="Mathewson C."/>
            <person name="Siddiqui A."/>
            <person name="Wye N."/>
            <person name="McPherson J."/>
            <person name="Zhao S."/>
            <person name="Fraser C.M."/>
            <person name="Shetty J."/>
            <person name="Shatsman S."/>
            <person name="Geer K."/>
            <person name="Chen Y."/>
            <person name="Abramzon S."/>
            <person name="Nierman W.C."/>
            <person name="Havlak P.H."/>
            <person name="Chen R."/>
            <person name="Durbin K.J."/>
            <person name="Egan A."/>
            <person name="Ren Y."/>
            <person name="Song X.-Z."/>
            <person name="Li B."/>
            <person name="Liu Y."/>
            <person name="Qin X."/>
            <person name="Cawley S."/>
            <person name="Cooney A.J."/>
            <person name="D'Souza L.M."/>
            <person name="Martin K."/>
            <person name="Wu J.Q."/>
            <person name="Gonzalez-Garay M.L."/>
            <person name="Jackson A.R."/>
            <person name="Kalafus K.J."/>
            <person name="McLeod M.P."/>
            <person name="Milosavljevic A."/>
            <person name="Virk D."/>
            <person name="Volkov A."/>
            <person name="Wheeler D.A."/>
            <person name="Zhang Z."/>
            <person name="Bailey J.A."/>
            <person name="Eichler E.E."/>
            <person name="Tuzun E."/>
            <person name="Birney E."/>
            <person name="Mongin E."/>
            <person name="Ureta-Vidal A."/>
            <person name="Woodwark C."/>
            <person name="Zdobnov E."/>
            <person name="Bork P."/>
            <person name="Suyama M."/>
            <person name="Torrents D."/>
            <person name="Alexandersson M."/>
            <person name="Trask B.J."/>
            <person name="Young J.M."/>
            <person name="Huang H."/>
            <person name="Wang H."/>
            <person name="Xing H."/>
            <person name="Daniels S."/>
            <person name="Gietzen D."/>
            <person name="Schmidt J."/>
            <person name="Stevens K."/>
            <person name="Vitt U."/>
            <person name="Wingrove J."/>
            <person name="Camara F."/>
            <person name="Mar Alba M."/>
            <person name="Abril J.F."/>
            <person name="Guigo R."/>
            <person name="Smit A."/>
            <person name="Dubchak I."/>
            <person name="Rubin E.M."/>
            <person name="Couronne O."/>
            <person name="Poliakov A."/>
            <person name="Huebner N."/>
            <person name="Ganten D."/>
            <person name="Goesele C."/>
            <person name="Hummel O."/>
            <person name="Kreitler T."/>
            <person name="Lee Y.-A."/>
            <person name="Monti J."/>
            <person name="Schulz H."/>
            <person name="Zimdahl H."/>
            <person name="Himmelbauer H."/>
            <person name="Lehrach H."/>
            <person name="Jacob H.J."/>
            <person name="Bromberg S."/>
            <person name="Gullings-Handley J."/>
            <person name="Jensen-Seaman M.I."/>
            <person name="Kwitek A.E."/>
            <person name="Lazar J."/>
            <person name="Pasko D."/>
            <person name="Tonellato P.J."/>
            <person name="Twigger S."/>
            <person name="Ponting C.P."/>
            <person name="Duarte J.M."/>
            <person name="Rice S."/>
            <person name="Goodstadt L."/>
            <person name="Beatson S.A."/>
            <person name="Emes R.D."/>
            <person name="Winter E.E."/>
            <person name="Webber C."/>
            <person name="Brandt P."/>
            <person name="Nyakatura G."/>
            <person name="Adetobi M."/>
            <person name="Chiaromonte F."/>
            <person name="Elnitski L."/>
            <person name="Eswara P."/>
            <person name="Hardison R.C."/>
            <person name="Hou M."/>
            <person name="Kolbe D."/>
            <person name="Makova K."/>
            <person name="Miller W."/>
            <person name="Nekrutenko A."/>
            <person name="Riemer C."/>
            <person name="Schwartz S."/>
            <person name="Taylor J."/>
            <person name="Yang S."/>
            <person name="Zhang Y."/>
            <person name="Lindpaintner K."/>
            <person name="Andrews T.D."/>
            <person name="Caccamo M."/>
            <person name="Clamp M."/>
            <person name="Clarke L."/>
            <person name="Curwen V."/>
            <person name="Durbin R.M."/>
            <person name="Eyras E."/>
            <person name="Searle S.M."/>
            <person name="Cooper G.M."/>
            <person name="Batzoglou S."/>
            <person name="Brudno M."/>
            <person name="Sidow A."/>
            <person name="Stone E.A."/>
            <person name="Payseur B.A."/>
            <person name="Bourque G."/>
            <person name="Lopez-Otin C."/>
            <person name="Puente X.S."/>
            <person name="Chakrabarti K."/>
            <person name="Chatterji S."/>
            <person name="Dewey C."/>
            <person name="Pachter L."/>
            <person name="Bray N."/>
            <person name="Yap V.B."/>
            <person name="Caspi A."/>
            <person name="Tesler G."/>
            <person name="Pevzner P.A."/>
            <person name="Haussler D."/>
            <person name="Roskin K.M."/>
            <person name="Baertsch R."/>
            <person name="Clawson H."/>
            <person name="Furey T.S."/>
            <person name="Hinrichs A.S."/>
            <person name="Karolchik D."/>
            <person name="Kent W.J."/>
            <person name="Rosenbloom K.R."/>
            <person name="Trumbower H."/>
            <person name="Weirauch M."/>
            <person name="Cooper D.N."/>
            <person name="Stenson P.D."/>
            <person name="Ma B."/>
            <person name="Brent M."/>
            <person name="Arumugam M."/>
            <person name="Shteynberg D."/>
            <person name="Copley R.R."/>
            <person name="Taylor M.S."/>
            <person name="Riethman H."/>
            <person name="Mudunuri U."/>
            <person name="Peterson J."/>
            <person name="Guyer M."/>
            <person name="Felsenfeld A."/>
            <person name="Old S."/>
            <person name="Mockrin S."/>
            <person name="Collins F.S."/>
        </authorList>
    </citation>
    <scope>NUCLEOTIDE SEQUENCE [LARGE SCALE GENOMIC DNA]</scope>
    <source>
        <strain>Brown Norway</strain>
    </source>
</reference>
<reference key="2">
    <citation type="submission" date="2005-09" db="EMBL/GenBank/DDBJ databases">
        <authorList>
            <person name="Mural R.J."/>
            <person name="Li P.W."/>
            <person name="Adams M.D."/>
            <person name="Amanatides P.G."/>
            <person name="Baden-Tillson H."/>
            <person name="Barnstead M."/>
            <person name="Chin S.H."/>
            <person name="Dew I."/>
            <person name="Evans C.A."/>
            <person name="Ferriera S."/>
            <person name="Flanigan M."/>
            <person name="Fosler C."/>
            <person name="Glodek A."/>
            <person name="Gu Z."/>
            <person name="Holt R.A."/>
            <person name="Jennings D."/>
            <person name="Kraft C.L."/>
            <person name="Lu F."/>
            <person name="Nguyen T."/>
            <person name="Nusskern D.R."/>
            <person name="Pfannkoch C.M."/>
            <person name="Sitter C."/>
            <person name="Sutton G.G."/>
            <person name="Venter J.C."/>
            <person name="Wang Z."/>
            <person name="Woodage T."/>
            <person name="Zheng X.H."/>
            <person name="Zhong F."/>
        </authorList>
    </citation>
    <scope>NUCLEOTIDE SEQUENCE [LARGE SCALE GENOMIC DNA]</scope>
    <source>
        <strain>Brown Norway</strain>
    </source>
</reference>
<reference key="3">
    <citation type="journal article" date="2016" name="J. Neurochem.">
        <title>Functional interaction between Lypd6 and nicotinic acetylcholine receptors.</title>
        <authorList>
            <person name="Arvaniti M."/>
            <person name="Jensen M.M."/>
            <person name="Soni N."/>
            <person name="Wang H."/>
            <person name="Klein A.B."/>
            <person name="Thiriet N."/>
            <person name="Pinborg L.H."/>
            <person name="Muldoon P.P."/>
            <person name="Wienecke J."/>
            <person name="Imad Damaj M."/>
            <person name="Kohlmeier K.A."/>
            <person name="Gondre-Lewis M.C."/>
            <person name="Mikkelsen J.D."/>
            <person name="Thomsen M.S."/>
        </authorList>
    </citation>
    <scope>FUNCTION</scope>
    <scope>SUBCELLULAR LOCATION</scope>
    <scope>TISSUE SPECIFICITY</scope>
    <scope>DEVELOPMENTAL STAGE</scope>
</reference>
<reference key="4">
    <citation type="journal article" date="2021" name="Front. Cell Dev. Biol.">
        <title>Human Three-Finger protein Lypd6 is a negative modulator of the cholinergic System in the brain.</title>
        <authorList>
            <person name="Kulbatskii D."/>
            <person name="Shenkarev Z."/>
            <person name="Bychkov M."/>
            <person name="Loktyushov E."/>
            <person name="Shulepko M."/>
            <person name="Koshelev S."/>
            <person name="Povarov I."/>
            <person name="Popov A."/>
            <person name="Peigneur S."/>
            <person name="Chugunov A."/>
            <person name="Kozlov S."/>
            <person name="Sharonova I."/>
            <person name="Efremov R."/>
            <person name="Skrebitsky V."/>
            <person name="Tytgat J."/>
            <person name="Kirpichnikov M."/>
            <person name="Lyukmanova E."/>
        </authorList>
    </citation>
    <scope>SUBCELLULAR LOCATION</scope>
    <scope>TISSUE SPECIFICITY</scope>
</reference>
<feature type="signal peptide" evidence="3">
    <location>
        <begin position="1"/>
        <end position="25"/>
    </location>
</feature>
<feature type="chain" id="PRO_5008161185" description="Ly6/PLAUR domain-containing protein 6" evidence="3">
    <location>
        <begin position="26"/>
        <end position="147"/>
    </location>
</feature>
<feature type="propeptide" id="PRO_0000457043" description="Removed in mature form" evidence="3">
    <location>
        <begin position="148"/>
        <end position="171"/>
    </location>
</feature>
<feature type="domain" description="UPAR/Ly6">
    <location>
        <begin position="47"/>
        <end position="141"/>
    </location>
</feature>
<feature type="short sequence motif" description="NxI motif" evidence="2">
    <location>
        <begin position="88"/>
        <end position="90"/>
    </location>
</feature>
<feature type="lipid moiety-binding region" description="GPI-anchor amidated asparagine" evidence="3">
    <location>
        <position position="147"/>
    </location>
</feature>
<feature type="glycosylation site" description="N-linked (GlcNAc...) asparagine" evidence="4">
    <location>
        <position position="134"/>
    </location>
</feature>
<feature type="glycosylation site" description="N-linked (GlcNAc...) asparagine" evidence="4">
    <location>
        <position position="147"/>
    </location>
</feature>
<feature type="disulfide bond" evidence="2">
    <location>
        <begin position="49"/>
        <end position="77"/>
    </location>
</feature>
<feature type="disulfide bond" evidence="2">
    <location>
        <begin position="52"/>
        <end position="61"/>
    </location>
</feature>
<feature type="disulfide bond" evidence="2">
    <location>
        <begin position="70"/>
        <end position="96"/>
    </location>
</feature>
<feature type="disulfide bond" evidence="2">
    <location>
        <begin position="102"/>
        <end position="121"/>
    </location>
</feature>
<feature type="disulfide bond" evidence="2">
    <location>
        <begin position="107"/>
        <end position="118"/>
    </location>
</feature>
<feature type="disulfide bond" evidence="2">
    <location>
        <begin position="122"/>
        <end position="127"/>
    </location>
</feature>
<sequence>MEPSPALAWLLLLSLVADCLKAAQSRDFTVKDIIYLHPSTTPYPGGFKCFTCEKAADNYECNRWAPDIYCPRDTRYCYTQHTMEVTGNSISVTKRCVPLEECLSTGCRDSEHEGYKICTSCCEGNICNLPLPRNDTDATFATTSPINQTNGHPHCVSVIVSCLWVWLGLTL</sequence>
<comment type="function">
    <text evidence="1 2 5">Acts as a modulator of nicotinic acetylcholine receptors (nAChRs) function in the brain (PubMed:27344019). Inhibits nicotine-induced Ca(2+) influx through nAChRs (By similarity). In vitro, specifically inhibits alpha-3:beta-4 and alpha-7 nAChR currents in an allosteric manner (By similarity). Acts as a positive regulator of Wnt/beta-catenin signaling (By similarity).</text>
</comment>
<comment type="subunit">
    <text evidence="2">Interacts with nicotinic acetylcholine receptors (nAChRs) including CHRNA3, CHRNA4, CHRNA5, CHRNA6, CHRNA7, CHRNB2 and CHRNB4 (By similarity). Interacts (via NxI motif) with LRP6 (By similarity).</text>
</comment>
<comment type="subcellular location">
    <subcellularLocation>
        <location evidence="2">Secreted</location>
    </subcellularLocation>
    <subcellularLocation>
        <location evidence="2">Cytoplasm</location>
    </subcellularLocation>
    <subcellularLocation>
        <location evidence="5">Cell membrane</location>
        <topology evidence="3">Lipid-anchor</topology>
        <topology evidence="3">GPI-anchor</topology>
    </subcellularLocation>
    <subcellularLocation>
        <location evidence="5">Synapse</location>
        <location evidence="5">Synaptosome</location>
    </subcellularLocation>
    <subcellularLocation>
        <location evidence="1">Membrane raft</location>
    </subcellularLocation>
    <subcellularLocation>
        <location evidence="6">Cell projection</location>
        <location evidence="6">Dendrite</location>
    </subcellularLocation>
    <subcellularLocation>
        <location evidence="6">Perikaryon</location>
    </subcellularLocation>
    <text evidence="6">Colocalizes with alpha-3:beta-4- and alpha-7- nicotinic acetylcholine receptors (nAChRs) in the primary cortex and hippocampus.</text>
</comment>
<comment type="tissue specificity">
    <text evidence="5 6">Expressed at high levels in the cortex and cerebellum of the brain, at moderate levels in the lung, kidney, and liver, and at low levels in the heart and prostate (at protein level) (PubMed:27344019). Expressed in neurons (at protein level) (PubMed:34631692).</text>
</comment>
<comment type="developmental stage">
    <text evidence="5">Highly expressed during early development, showing high levels in the first postnatal days, followed by a decrease toward adulthood.</text>
</comment>
<comment type="domain">
    <text evidence="2">The UPAR/Ly6 domain is sufficient for inhibiting alpha-3:beta-4 and alpha-7-dependent nAChR currents.</text>
</comment>
<dbReference type="EMBL" id="AABR07052085">
    <property type="status" value="NOT_ANNOTATED_CDS"/>
    <property type="molecule type" value="Genomic_DNA"/>
</dbReference>
<dbReference type="EMBL" id="CH473983">
    <property type="protein sequence ID" value="EDM00460.1"/>
    <property type="molecule type" value="Genomic_DNA"/>
</dbReference>
<dbReference type="EMBL" id="CH473983">
    <property type="protein sequence ID" value="EDM00461.1"/>
    <property type="molecule type" value="Genomic_DNA"/>
</dbReference>
<dbReference type="RefSeq" id="NP_001406611.1">
    <property type="nucleotide sequence ID" value="NM_001419682.1"/>
</dbReference>
<dbReference type="RefSeq" id="XP_001053512.3">
    <property type="nucleotide sequence ID" value="XM_001053512.5"/>
</dbReference>
<dbReference type="RefSeq" id="XP_003753769.1">
    <property type="nucleotide sequence ID" value="XM_003753721.3"/>
</dbReference>
<dbReference type="RefSeq" id="XP_006224472.1">
    <property type="nucleotide sequence ID" value="XM_006224410.3"/>
</dbReference>
<dbReference type="RefSeq" id="XP_006234222.1">
    <property type="nucleotide sequence ID" value="XM_006234160.3"/>
</dbReference>
<dbReference type="RefSeq" id="XP_008773595.1">
    <property type="nucleotide sequence ID" value="XM_008775373.2"/>
</dbReference>
<dbReference type="RefSeq" id="XP_038962178.1">
    <property type="nucleotide sequence ID" value="XM_039106250.2"/>
</dbReference>
<dbReference type="RefSeq" id="XP_063140603.1">
    <property type="nucleotide sequence ID" value="XM_063284533.1"/>
</dbReference>
<dbReference type="RefSeq" id="XP_063140604.1">
    <property type="nucleotide sequence ID" value="XM_063284534.1"/>
</dbReference>
<dbReference type="SMR" id="D3ZTT2"/>
<dbReference type="FunCoup" id="D3ZTT2">
    <property type="interactions" value="1305"/>
</dbReference>
<dbReference type="STRING" id="10116.ENSRNOP00000056346"/>
<dbReference type="GlyCosmos" id="D3ZTT2">
    <property type="glycosylation" value="2 sites, No reported glycans"/>
</dbReference>
<dbReference type="GlyGen" id="D3ZTT2">
    <property type="glycosylation" value="2 sites"/>
</dbReference>
<dbReference type="PhosphoSitePlus" id="D3ZTT2"/>
<dbReference type="PaxDb" id="10116-ENSRNOP00000056346"/>
<dbReference type="Ensembl" id="ENSRNOT00000095416.1">
    <property type="protein sequence ID" value="ENSRNOP00000096059.1"/>
    <property type="gene ID" value="ENSRNOG00000068044.1"/>
</dbReference>
<dbReference type="GeneID" id="679564"/>
<dbReference type="AGR" id="RGD:1587119"/>
<dbReference type="RGD" id="1587119">
    <property type="gene designation" value="Lypd6"/>
</dbReference>
<dbReference type="eggNOG" id="ENOG502RYB5">
    <property type="taxonomic scope" value="Eukaryota"/>
</dbReference>
<dbReference type="GeneTree" id="ENSGT00390000000220"/>
<dbReference type="HOGENOM" id="CLU_105474_1_0_1"/>
<dbReference type="InParanoid" id="D3ZTT2"/>
<dbReference type="OMA" id="AWPTVAW"/>
<dbReference type="OrthoDB" id="6149028at2759"/>
<dbReference type="TreeFam" id="TF332443"/>
<dbReference type="PRO" id="PR:D3ZTT2"/>
<dbReference type="Proteomes" id="UP000002494">
    <property type="component" value="Chromosome 3"/>
</dbReference>
<dbReference type="Proteomes" id="UP000234681">
    <property type="component" value="Chromosome 3"/>
</dbReference>
<dbReference type="Bgee" id="ENSRNOG00000038980">
    <property type="expression patterns" value="Expressed in frontal cortex and 10 other cell types or tissues"/>
</dbReference>
<dbReference type="GO" id="GO:0005737">
    <property type="term" value="C:cytoplasm"/>
    <property type="evidence" value="ECO:0007669"/>
    <property type="project" value="UniProtKB-SubCell"/>
</dbReference>
<dbReference type="GO" id="GO:0030425">
    <property type="term" value="C:dendrite"/>
    <property type="evidence" value="ECO:0007669"/>
    <property type="project" value="UniProtKB-SubCell"/>
</dbReference>
<dbReference type="GO" id="GO:0005576">
    <property type="term" value="C:extracellular region"/>
    <property type="evidence" value="ECO:0007669"/>
    <property type="project" value="UniProtKB-SubCell"/>
</dbReference>
<dbReference type="GO" id="GO:0016020">
    <property type="term" value="C:membrane"/>
    <property type="evidence" value="ECO:0000314"/>
    <property type="project" value="UniProtKB"/>
</dbReference>
<dbReference type="GO" id="GO:0045121">
    <property type="term" value="C:membrane raft"/>
    <property type="evidence" value="ECO:0007669"/>
    <property type="project" value="UniProtKB-SubCell"/>
</dbReference>
<dbReference type="GO" id="GO:0043005">
    <property type="term" value="C:neuron projection"/>
    <property type="evidence" value="ECO:0000314"/>
    <property type="project" value="UniProtKB"/>
</dbReference>
<dbReference type="GO" id="GO:0043204">
    <property type="term" value="C:perikaryon"/>
    <property type="evidence" value="ECO:0007669"/>
    <property type="project" value="UniProtKB-SubCell"/>
</dbReference>
<dbReference type="GO" id="GO:0005886">
    <property type="term" value="C:plasma membrane"/>
    <property type="evidence" value="ECO:0007669"/>
    <property type="project" value="UniProtKB-SubCell"/>
</dbReference>
<dbReference type="GO" id="GO:0098552">
    <property type="term" value="C:side of membrane"/>
    <property type="evidence" value="ECO:0007669"/>
    <property type="project" value="UniProtKB-KW"/>
</dbReference>
<dbReference type="GO" id="GO:0045202">
    <property type="term" value="C:synapse"/>
    <property type="evidence" value="ECO:0007669"/>
    <property type="project" value="UniProtKB-SubCell"/>
</dbReference>
<dbReference type="GO" id="GO:0030550">
    <property type="term" value="F:acetylcholine receptor inhibitor activity"/>
    <property type="evidence" value="ECO:0000314"/>
    <property type="project" value="UniProtKB"/>
</dbReference>
<dbReference type="GO" id="GO:0030548">
    <property type="term" value="F:acetylcholine receptor regulator activity"/>
    <property type="evidence" value="ECO:0000266"/>
    <property type="project" value="RGD"/>
</dbReference>
<dbReference type="GO" id="GO:0090263">
    <property type="term" value="P:positive regulation of canonical Wnt signaling pathway"/>
    <property type="evidence" value="ECO:0000318"/>
    <property type="project" value="GO_Central"/>
</dbReference>
<dbReference type="CDD" id="cd23625">
    <property type="entry name" value="TFP_LU_ECD_LYPD6"/>
    <property type="match status" value="1"/>
</dbReference>
<dbReference type="FunFam" id="2.10.60.10:FF:000004">
    <property type="entry name" value="Ly6/PLAUR domain-containing protein 6"/>
    <property type="match status" value="1"/>
</dbReference>
<dbReference type="Gene3D" id="2.10.60.10">
    <property type="entry name" value="CD59"/>
    <property type="match status" value="1"/>
</dbReference>
<dbReference type="InterPro" id="IPR039457">
    <property type="entry name" value="LYPD6-like"/>
</dbReference>
<dbReference type="InterPro" id="IPR045860">
    <property type="entry name" value="Snake_toxin-like_sf"/>
</dbReference>
<dbReference type="PANTHER" id="PTHR31171">
    <property type="entry name" value="LY6/PLAUR DOMAIN-CONTAINING PROTEIN 6"/>
    <property type="match status" value="1"/>
</dbReference>
<dbReference type="PANTHER" id="PTHR31171:SF0">
    <property type="entry name" value="LY6_PLAUR DOMAIN-CONTAINING PROTEIN 6"/>
    <property type="match status" value="1"/>
</dbReference>
<dbReference type="Pfam" id="PF16975">
    <property type="entry name" value="UPAR_LY6_2"/>
    <property type="match status" value="1"/>
</dbReference>
<dbReference type="SUPFAM" id="SSF57302">
    <property type="entry name" value="Snake toxin-like"/>
    <property type="match status" value="1"/>
</dbReference>
<name>LYPD6_RAT</name>
<proteinExistence type="evidence at protein level"/>
<organism>
    <name type="scientific">Rattus norvegicus</name>
    <name type="common">Rat</name>
    <dbReference type="NCBI Taxonomy" id="10116"/>
    <lineage>
        <taxon>Eukaryota</taxon>
        <taxon>Metazoa</taxon>
        <taxon>Chordata</taxon>
        <taxon>Craniata</taxon>
        <taxon>Vertebrata</taxon>
        <taxon>Euteleostomi</taxon>
        <taxon>Mammalia</taxon>
        <taxon>Eutheria</taxon>
        <taxon>Euarchontoglires</taxon>
        <taxon>Glires</taxon>
        <taxon>Rodentia</taxon>
        <taxon>Myomorpha</taxon>
        <taxon>Muroidea</taxon>
        <taxon>Muridae</taxon>
        <taxon>Murinae</taxon>
        <taxon>Rattus</taxon>
    </lineage>
</organism>
<accession>D3ZTT2</accession>
<protein>
    <recommendedName>
        <fullName>Ly6/PLAUR domain-containing protein 6</fullName>
    </recommendedName>
</protein>